<feature type="chain" id="PRO_0000051230" description="Serine-threonine kinase receptor-associated protein">
    <location>
        <begin position="1"/>
        <end position="350"/>
    </location>
</feature>
<feature type="repeat" description="WD 1">
    <location>
        <begin position="12"/>
        <end position="56"/>
    </location>
</feature>
<feature type="repeat" description="WD 2">
    <location>
        <begin position="57"/>
        <end position="96"/>
    </location>
</feature>
<feature type="repeat" description="WD 3">
    <location>
        <begin position="98"/>
        <end position="137"/>
    </location>
</feature>
<feature type="repeat" description="WD 4">
    <location>
        <begin position="141"/>
        <end position="179"/>
    </location>
</feature>
<feature type="repeat" description="WD 5">
    <location>
        <begin position="180"/>
        <end position="212"/>
    </location>
</feature>
<feature type="repeat" description="WD 6">
    <location>
        <begin position="221"/>
        <end position="262"/>
    </location>
</feature>
<feature type="repeat" description="WD 7">
    <location>
        <begin position="263"/>
        <end position="302"/>
    </location>
</feature>
<feature type="modified residue" description="Phosphoserine" evidence="11">
    <location>
        <position position="312"/>
    </location>
</feature>
<feature type="modified residue" description="Phosphoserine" evidence="10 12">
    <location>
        <position position="335"/>
    </location>
</feature>
<feature type="modified residue" description="Phosphoserine" evidence="10 12">
    <location>
        <position position="338"/>
    </location>
</feature>
<feature type="splice variant" id="VSP_056873" description="In isoform 2." evidence="8">
    <original>K</original>
    <variation>KGAGQHLPRLSGQH</variation>
    <location>
        <position position="37"/>
    </location>
</feature>
<feature type="sequence conflict" description="In Ref. 2; BAA75544." evidence="9" ref="2">
    <original>G</original>
    <variation>D</variation>
    <location>
        <position position="24"/>
    </location>
</feature>
<feature type="sequence conflict" description="In Ref. 6; AAV38848." evidence="9" ref="6">
    <original>E</original>
    <variation>A</variation>
    <location>
        <position position="332"/>
    </location>
</feature>
<feature type="sequence conflict" description="In Ref. 5; CAB66626." evidence="9" ref="5">
    <original>D</original>
    <variation>E</variation>
    <location>
        <position position="339"/>
    </location>
</feature>
<dbReference type="EMBL" id="AJ010025">
    <property type="protein sequence ID" value="CAB38041.1"/>
    <property type="molecule type" value="mRNA"/>
</dbReference>
<dbReference type="EMBL" id="AB024327">
    <property type="protein sequence ID" value="BAA75544.1"/>
    <property type="molecule type" value="mRNA"/>
</dbReference>
<dbReference type="EMBL" id="AF161496">
    <property type="protein sequence ID" value="AAF29111.1"/>
    <property type="molecule type" value="mRNA"/>
</dbReference>
<dbReference type="EMBL" id="AY049776">
    <property type="protein sequence ID" value="AAL15433.1"/>
    <property type="molecule type" value="mRNA"/>
</dbReference>
<dbReference type="EMBL" id="AL136691">
    <property type="protein sequence ID" value="CAB66626.1"/>
    <property type="molecule type" value="mRNA"/>
</dbReference>
<dbReference type="EMBL" id="BT020044">
    <property type="protein sequence ID" value="AAV38847.1"/>
    <property type="molecule type" value="mRNA"/>
</dbReference>
<dbReference type="EMBL" id="BT020045">
    <property type="protein sequence ID" value="AAV38848.1"/>
    <property type="molecule type" value="mRNA"/>
</dbReference>
<dbReference type="EMBL" id="AK297942">
    <property type="protein sequence ID" value="BAG60258.1"/>
    <property type="molecule type" value="mRNA"/>
</dbReference>
<dbReference type="EMBL" id="AK312295">
    <property type="protein sequence ID" value="BAG35222.1"/>
    <property type="molecule type" value="mRNA"/>
</dbReference>
<dbReference type="EMBL" id="AC022073">
    <property type="status" value="NOT_ANNOTATED_CDS"/>
    <property type="molecule type" value="Genomic_DNA"/>
</dbReference>
<dbReference type="EMBL" id="CH471094">
    <property type="protein sequence ID" value="EAW96356.1"/>
    <property type="molecule type" value="Genomic_DNA"/>
</dbReference>
<dbReference type="EMBL" id="BC000162">
    <property type="protein sequence ID" value="AAH00162.1"/>
    <property type="molecule type" value="mRNA"/>
</dbReference>
<dbReference type="EMBL" id="BC062306">
    <property type="protein sequence ID" value="AAH62306.1"/>
    <property type="molecule type" value="mRNA"/>
</dbReference>
<dbReference type="CCDS" id="CCDS8676.1">
    <molecule id="Q9Y3F4-1"/>
</dbReference>
<dbReference type="RefSeq" id="NP_009109.3">
    <molecule id="Q9Y3F4-1"/>
    <property type="nucleotide sequence ID" value="NM_007178.3"/>
</dbReference>
<dbReference type="SMR" id="Q9Y3F4"/>
<dbReference type="BioGRID" id="116342">
    <property type="interactions" value="285"/>
</dbReference>
<dbReference type="ComplexPortal" id="CPX-6031">
    <property type="entry name" value="Survival motor neuron complex"/>
</dbReference>
<dbReference type="CORUM" id="Q9Y3F4"/>
<dbReference type="FunCoup" id="Q9Y3F4">
    <property type="interactions" value="2183"/>
</dbReference>
<dbReference type="IntAct" id="Q9Y3F4">
    <property type="interactions" value="100"/>
</dbReference>
<dbReference type="MINT" id="Q9Y3F4"/>
<dbReference type="STRING" id="9606.ENSP00000392270"/>
<dbReference type="GlyGen" id="Q9Y3F4">
    <property type="glycosylation" value="1 site, 1 O-linked glycan (1 site)"/>
</dbReference>
<dbReference type="iPTMnet" id="Q9Y3F4"/>
<dbReference type="PhosphoSitePlus" id="Q9Y3F4"/>
<dbReference type="SwissPalm" id="Q9Y3F4"/>
<dbReference type="BioMuta" id="STRAP"/>
<dbReference type="DMDM" id="12643951"/>
<dbReference type="OGP" id="Q9Y3F4"/>
<dbReference type="jPOST" id="Q9Y3F4"/>
<dbReference type="MassIVE" id="Q9Y3F4"/>
<dbReference type="PaxDb" id="9606-ENSP00000392270"/>
<dbReference type="PeptideAtlas" id="Q9Y3F4"/>
<dbReference type="ProteomicsDB" id="4702"/>
<dbReference type="ProteomicsDB" id="86036">
    <molecule id="Q9Y3F4-1"/>
</dbReference>
<dbReference type="Pumba" id="Q9Y3F4"/>
<dbReference type="TopDownProteomics" id="Q9Y3F4-1">
    <molecule id="Q9Y3F4-1"/>
</dbReference>
<dbReference type="Antibodypedia" id="12145">
    <property type="antibodies" value="220 antibodies from 32 providers"/>
</dbReference>
<dbReference type="DNASU" id="11171"/>
<dbReference type="Ensembl" id="ENST00000025399.10">
    <molecule id="Q9Y3F4-2"/>
    <property type="protein sequence ID" value="ENSP00000025399.6"/>
    <property type="gene ID" value="ENSG00000023734.11"/>
</dbReference>
<dbReference type="Ensembl" id="ENST00000419869.7">
    <molecule id="Q9Y3F4-1"/>
    <property type="protein sequence ID" value="ENSP00000392270.2"/>
    <property type="gene ID" value="ENSG00000023734.11"/>
</dbReference>
<dbReference type="GeneID" id="11171"/>
<dbReference type="KEGG" id="hsa:11171"/>
<dbReference type="MANE-Select" id="ENST00000419869.7">
    <property type="protein sequence ID" value="ENSP00000392270.2"/>
    <property type="RefSeq nucleotide sequence ID" value="NM_007178.4"/>
    <property type="RefSeq protein sequence ID" value="NP_009109.3"/>
</dbReference>
<dbReference type="UCSC" id="uc001rdc.5">
    <molecule id="Q9Y3F4-1"/>
    <property type="organism name" value="human"/>
</dbReference>
<dbReference type="AGR" id="HGNC:30796"/>
<dbReference type="CTD" id="11171"/>
<dbReference type="DisGeNET" id="11171"/>
<dbReference type="GeneCards" id="STRAP"/>
<dbReference type="HGNC" id="HGNC:30796">
    <property type="gene designation" value="STRAP"/>
</dbReference>
<dbReference type="HPA" id="ENSG00000023734">
    <property type="expression patterns" value="Low tissue specificity"/>
</dbReference>
<dbReference type="MIM" id="605986">
    <property type="type" value="gene"/>
</dbReference>
<dbReference type="neXtProt" id="NX_Q9Y3F4"/>
<dbReference type="OpenTargets" id="ENSG00000023734"/>
<dbReference type="PharmGKB" id="PA134867032"/>
<dbReference type="VEuPathDB" id="HostDB:ENSG00000023734"/>
<dbReference type="eggNOG" id="KOG0278">
    <property type="taxonomic scope" value="Eukaryota"/>
</dbReference>
<dbReference type="GeneTree" id="ENSGT00940000155197"/>
<dbReference type="HOGENOM" id="CLU_000288_57_6_1"/>
<dbReference type="InParanoid" id="Q9Y3F4"/>
<dbReference type="OMA" id="DGFYGLW"/>
<dbReference type="OrthoDB" id="200206at2759"/>
<dbReference type="PAN-GO" id="Q9Y3F4">
    <property type="GO annotations" value="3 GO annotations based on evolutionary models"/>
</dbReference>
<dbReference type="PhylomeDB" id="Q9Y3F4"/>
<dbReference type="TreeFam" id="TF323287"/>
<dbReference type="PathwayCommons" id="Q9Y3F4"/>
<dbReference type="Reactome" id="R-HSA-2173788">
    <property type="pathway name" value="Downregulation of TGF-beta receptor signaling"/>
</dbReference>
<dbReference type="SignaLink" id="Q9Y3F4"/>
<dbReference type="SIGNOR" id="Q9Y3F4"/>
<dbReference type="BioGRID-ORCS" id="11171">
    <property type="hits" value="641 hits in 1173 CRISPR screens"/>
</dbReference>
<dbReference type="CD-CODE" id="6F24707C">
    <property type="entry name" value="Cajal body"/>
</dbReference>
<dbReference type="CD-CODE" id="DEE660B4">
    <property type="entry name" value="Stress granule"/>
</dbReference>
<dbReference type="CD-CODE" id="FB4E32DD">
    <property type="entry name" value="Presynaptic clusters and postsynaptic densities"/>
</dbReference>
<dbReference type="ChiTaRS" id="STRAP">
    <property type="organism name" value="human"/>
</dbReference>
<dbReference type="GeneWiki" id="STRAP"/>
<dbReference type="GenomeRNAi" id="11171"/>
<dbReference type="Pharos" id="Q9Y3F4">
    <property type="development level" value="Tbio"/>
</dbReference>
<dbReference type="PRO" id="PR:Q9Y3F4"/>
<dbReference type="Proteomes" id="UP000005640">
    <property type="component" value="Chromosome 12"/>
</dbReference>
<dbReference type="RNAct" id="Q9Y3F4">
    <property type="molecule type" value="protein"/>
</dbReference>
<dbReference type="Bgee" id="ENSG00000023734">
    <property type="expression patterns" value="Expressed in secondary oocyte and 214 other cell types or tissues"/>
</dbReference>
<dbReference type="ExpressionAtlas" id="Q9Y3F4">
    <property type="expression patterns" value="baseline and differential"/>
</dbReference>
<dbReference type="GO" id="GO:0005737">
    <property type="term" value="C:cytoplasm"/>
    <property type="evidence" value="ECO:0000314"/>
    <property type="project" value="UniProtKB"/>
</dbReference>
<dbReference type="GO" id="GO:0005829">
    <property type="term" value="C:cytosol"/>
    <property type="evidence" value="ECO:0000314"/>
    <property type="project" value="HPA"/>
</dbReference>
<dbReference type="GO" id="GO:0005634">
    <property type="term" value="C:nucleus"/>
    <property type="evidence" value="ECO:0007669"/>
    <property type="project" value="UniProtKB-SubCell"/>
</dbReference>
<dbReference type="GO" id="GO:0032797">
    <property type="term" value="C:SMN complex"/>
    <property type="evidence" value="ECO:0000314"/>
    <property type="project" value="UniProtKB"/>
</dbReference>
<dbReference type="GO" id="GO:0034719">
    <property type="term" value="C:SMN-Sm protein complex"/>
    <property type="evidence" value="ECO:0000314"/>
    <property type="project" value="UniProtKB"/>
</dbReference>
<dbReference type="GO" id="GO:0003729">
    <property type="term" value="F:mRNA binding"/>
    <property type="evidence" value="ECO:0007669"/>
    <property type="project" value="Ensembl"/>
</dbReference>
<dbReference type="GO" id="GO:0003723">
    <property type="term" value="F:RNA binding"/>
    <property type="evidence" value="ECO:0007005"/>
    <property type="project" value="UniProtKB"/>
</dbReference>
<dbReference type="GO" id="GO:0005102">
    <property type="term" value="F:signaling receptor binding"/>
    <property type="evidence" value="ECO:0007669"/>
    <property type="project" value="Ensembl"/>
</dbReference>
<dbReference type="GO" id="GO:1990447">
    <property type="term" value="F:U2 snRNP binding"/>
    <property type="evidence" value="ECO:0007669"/>
    <property type="project" value="Ensembl"/>
</dbReference>
<dbReference type="GO" id="GO:0000380">
    <property type="term" value="P:alternative mRNA splicing, via spliceosome"/>
    <property type="evidence" value="ECO:0007669"/>
    <property type="project" value="Ensembl"/>
</dbReference>
<dbReference type="GO" id="GO:0030277">
    <property type="term" value="P:maintenance of gastrointestinal epithelium"/>
    <property type="evidence" value="ECO:0000315"/>
    <property type="project" value="UniProtKB"/>
</dbReference>
<dbReference type="GO" id="GO:0000122">
    <property type="term" value="P:negative regulation of transcription by RNA polymerase II"/>
    <property type="evidence" value="ECO:0007669"/>
    <property type="project" value="Ensembl"/>
</dbReference>
<dbReference type="GO" id="GO:0030512">
    <property type="term" value="P:negative regulation of transforming growth factor beta receptor signaling pathway"/>
    <property type="evidence" value="ECO:0000315"/>
    <property type="project" value="UniProtKB"/>
</dbReference>
<dbReference type="GO" id="GO:0030182">
    <property type="term" value="P:neuron differentiation"/>
    <property type="evidence" value="ECO:0007669"/>
    <property type="project" value="Ensembl"/>
</dbReference>
<dbReference type="GO" id="GO:0000387">
    <property type="term" value="P:spliceosomal snRNP assembly"/>
    <property type="evidence" value="ECO:0000314"/>
    <property type="project" value="UniProtKB"/>
</dbReference>
<dbReference type="CDD" id="cd00200">
    <property type="entry name" value="WD40"/>
    <property type="match status" value="1"/>
</dbReference>
<dbReference type="FunFam" id="2.130.10.10:FF:000133">
    <property type="entry name" value="Serine-threonine kinase receptor-associated protein"/>
    <property type="match status" value="1"/>
</dbReference>
<dbReference type="Gene3D" id="2.130.10.10">
    <property type="entry name" value="YVTN repeat-like/Quinoprotein amine dehydrogenase"/>
    <property type="match status" value="1"/>
</dbReference>
<dbReference type="InterPro" id="IPR020472">
    <property type="entry name" value="G-protein_beta_WD-40_rep"/>
</dbReference>
<dbReference type="InterPro" id="IPR015943">
    <property type="entry name" value="WD40/YVTN_repeat-like_dom_sf"/>
</dbReference>
<dbReference type="InterPro" id="IPR036322">
    <property type="entry name" value="WD40_repeat_dom_sf"/>
</dbReference>
<dbReference type="InterPro" id="IPR001680">
    <property type="entry name" value="WD40_rpt"/>
</dbReference>
<dbReference type="PANTHER" id="PTHR19877">
    <property type="entry name" value="EUKARYOTIC TRANSLATION INITIATION FACTOR 3 SUBUNIT I"/>
    <property type="match status" value="1"/>
</dbReference>
<dbReference type="PANTHER" id="PTHR19877:SF13">
    <property type="entry name" value="SERINE-THREONINE KINASE RECEPTOR-ASSOCIATED PROTEIN"/>
    <property type="match status" value="1"/>
</dbReference>
<dbReference type="Pfam" id="PF00400">
    <property type="entry name" value="WD40"/>
    <property type="match status" value="6"/>
</dbReference>
<dbReference type="PRINTS" id="PR00320">
    <property type="entry name" value="GPROTEINBRPT"/>
</dbReference>
<dbReference type="SMART" id="SM00320">
    <property type="entry name" value="WD40"/>
    <property type="match status" value="7"/>
</dbReference>
<dbReference type="SUPFAM" id="SSF50978">
    <property type="entry name" value="WD40 repeat-like"/>
    <property type="match status" value="1"/>
</dbReference>
<dbReference type="PROSITE" id="PS00678">
    <property type="entry name" value="WD_REPEATS_1"/>
    <property type="match status" value="1"/>
</dbReference>
<dbReference type="PROSITE" id="PS50082">
    <property type="entry name" value="WD_REPEATS_2"/>
    <property type="match status" value="4"/>
</dbReference>
<dbReference type="PROSITE" id="PS50294">
    <property type="entry name" value="WD_REPEATS_REGION"/>
    <property type="match status" value="1"/>
</dbReference>
<accession>Q9Y3F4</accession>
<accession>B2R5S5</accession>
<accession>B4DNJ6</accession>
<accession>Q5TZT4</accession>
<accession>Q9NTK0</accession>
<accession>Q9UQC8</accession>
<comment type="function">
    <text evidence="4 6">The SMN complex catalyzes the assembly of small nuclear ribonucleoproteins (snRNPs), the building blocks of the spliceosome, and thereby plays an important role in the splicing of cellular pre-mRNAs. Most spliceosomal snRNPs contain a common set of Sm proteins SNRPB, SNRPD1, SNRPD2, SNRPD3, SNRPE, SNRPF and SNRPG that assemble in a heptameric protein ring on the Sm site of the small nuclear RNA to form the core snRNP (Sm core). In the cytosol, the Sm proteins SNRPD1, SNRPD2, SNRPE, SNRPF and SNRPG are trapped in an inactive 6S pICln-Sm complex by the chaperone CLNS1A that controls the assembly of the core snRNP. To assemble core snRNPs, the SMN complex accepts the trapped 5Sm proteins from CLNS1A forming an intermediate. Binding of snRNA inside 5Sm triggers eviction of the SMN complex, thereby allowing binding of SNRPD3 and SNRPB to complete assembly of the core snRNP. STRAP plays a role in the cellular distribution of the SMN complex. Negatively regulates TGF-beta signaling but positively regulates the PDPK1 kinase activity by enhancing its autophosphorylation and by significantly reducing the association of PDPK1 with 14-3-3 protein.</text>
</comment>
<comment type="subunit">
    <text evidence="1 2 3 4 5 6 7">Part of the core SMN complex that contains SMN1, GEMIN2/SIP1, DDX20/GEMIN3, GEMIN4, GEMIN5, GEMIN6, GEMIN7, GEMIN8 and STRAP/UNRIP (PubMed:15848170, PubMed:16159890, PubMed:17178713). Part of the SMN-Sm complex that contains SMN1, GEMIN2/SIP1, DDX20/GEMIN3, GEMIN4, GEMIN5, GEMIN6, GEMIN7, GEMIN8, STRAP/UNRIP and the Sm proteins SNRPB, SNRPD1, SNRPD2, SNRPD3, SNRPE, SNRPF and SNRPG (PubMed:18984161). Associates with the SMN complex in the cytoplasm but not in the nucleus (PubMed:16159890). Interacts with GEMIN6; the interaction is direct (PubMed:15848170). Interacts with GEMIN7; the interaction is direct (PubMed:15848170, PubMed:17178713). Interacts with CSDE1/UNR and MAWBP (PubMed:10049359). Interacts with PDPK1 (PubMed:16251192). Interacts with TRIM48 (PubMed:29186683).</text>
</comment>
<comment type="interaction">
    <interactant intactId="EBI-727414">
        <id>Q9Y3F4</id>
    </interactant>
    <interactant intactId="EBI-752301">
        <id>Q8WXD5</id>
        <label>GEMIN6</label>
    </interactant>
    <organismsDiffer>false</organismsDiffer>
    <experiments>6</experiments>
</comment>
<comment type="interaction">
    <interactant intactId="EBI-727414">
        <id>Q9Y3F4</id>
    </interactant>
    <interactant intactId="EBI-715455">
        <id>Q9H840</id>
        <label>GEMIN7</label>
    </interactant>
    <organismsDiffer>false</organismsDiffer>
    <experiments>7</experiments>
</comment>
<comment type="interaction">
    <interactant intactId="EBI-727414">
        <id>Q9Y3F4</id>
    </interactant>
    <interactant intactId="EBI-466029">
        <id>P42858</id>
        <label>HTT</label>
    </interactant>
    <organismsDiffer>false</organismsDiffer>
    <experiments>4</experiments>
</comment>
<comment type="interaction">
    <interactant intactId="EBI-727414">
        <id>Q9Y3F4</id>
    </interactant>
    <interactant intactId="EBI-741141">
        <id>P15531</id>
        <label>NME1</label>
    </interactant>
    <organismsDiffer>false</organismsDiffer>
    <experiments>9</experiments>
</comment>
<comment type="interaction">
    <interactant intactId="EBI-727414">
        <id>Q9Y3F4</id>
    </interactant>
    <interactant intactId="EBI-372458">
        <id>P14678</id>
        <label>SNRPB</label>
    </interactant>
    <organismsDiffer>false</organismsDiffer>
    <experiments>2</experiments>
</comment>
<comment type="interaction">
    <interactant intactId="EBI-727414">
        <id>Q9Y3F4</id>
    </interactant>
    <interactant intactId="EBI-297993">
        <id>P62316</id>
        <label>SNRPD2</label>
    </interactant>
    <organismsDiffer>false</organismsDiffer>
    <experiments>2</experiments>
</comment>
<comment type="interaction">
    <interactant intactId="EBI-727414">
        <id>Q9Y3F4</id>
    </interactant>
    <interactant intactId="EBI-23877111">
        <id>Q7Z422-4</id>
        <label>SZRD1</label>
    </interactant>
    <organismsDiffer>false</organismsDiffer>
    <experiments>3</experiments>
</comment>
<comment type="subcellular location">
    <subcellularLocation>
        <location>Cytoplasm</location>
    </subcellularLocation>
    <subcellularLocation>
        <location>Nucleus</location>
    </subcellularLocation>
    <text>Localized predominantly in the cytoplasm but also found in the nucleus.</text>
</comment>
<comment type="alternative products">
    <event type="alternative splicing"/>
    <isoform>
        <id>Q9Y3F4-1</id>
        <name>1</name>
        <sequence type="displayed"/>
    </isoform>
    <isoform>
        <id>Q9Y3F4-2</id>
        <name>2</name>
        <sequence type="described" ref="VSP_056873"/>
    </isoform>
</comment>
<comment type="similarity">
    <text evidence="9">Belongs to the WD repeat STRAP family.</text>
</comment>
<proteinExistence type="evidence at protein level"/>
<protein>
    <recommendedName>
        <fullName>Serine-threonine kinase receptor-associated protein</fullName>
    </recommendedName>
    <alternativeName>
        <fullName>MAP activator with WD repeats</fullName>
    </alternativeName>
    <alternativeName>
        <fullName>UNR-interacting protein</fullName>
    </alternativeName>
    <alternativeName>
        <fullName>WD-40 repeat protein PT-WD</fullName>
    </alternativeName>
</protein>
<keyword id="KW-0025">Alternative splicing</keyword>
<keyword id="KW-0963">Cytoplasm</keyword>
<keyword id="KW-0903">Direct protein sequencing</keyword>
<keyword id="KW-0507">mRNA processing</keyword>
<keyword id="KW-0508">mRNA splicing</keyword>
<keyword id="KW-0539">Nucleus</keyword>
<keyword id="KW-0597">Phosphoprotein</keyword>
<keyword id="KW-1267">Proteomics identification</keyword>
<keyword id="KW-1185">Reference proteome</keyword>
<keyword id="KW-0677">Repeat</keyword>
<keyword id="KW-0853">WD repeat</keyword>
<reference key="1">
    <citation type="journal article" date="1999" name="Genes Dev.">
        <title>unr, a cellular cytoplasmic RNA-binding protein with five cold-shock domains, is required for internal initiation of translation of human rhinovirus RNA.</title>
        <authorList>
            <person name="Hunt S.L."/>
            <person name="Hsuan J.J."/>
            <person name="Totty N."/>
            <person name="Jackson R.J."/>
        </authorList>
    </citation>
    <scope>NUCLEOTIDE SEQUENCE [MRNA] (ISOFORM 1)</scope>
    <scope>INTERACTION WITH CSDE1</scope>
</reference>
<reference key="2">
    <citation type="journal article" date="2000" name="Cancer Res.">
        <title>Molecular cloning and characterization of human MAWD, a novel protein containing WD-40 repeats frequently overexpressed in breast cancer.</title>
        <authorList>
            <person name="Matsuda S."/>
            <person name="Katsumata R."/>
            <person name="Okuda T."/>
            <person name="Yamamoto T."/>
            <person name="Miyazaki K."/>
            <person name="Senga T."/>
            <person name="Machida K."/>
            <person name="Thant A.A."/>
            <person name="Nakatsugawa S."/>
            <person name="Hamaguchi M."/>
        </authorList>
    </citation>
    <scope>NUCLEOTIDE SEQUENCE [MRNA] (ISOFORM 1)</scope>
    <source>
        <tissue>Liver</tissue>
    </source>
</reference>
<reference key="3">
    <citation type="submission" date="1999-06" db="EMBL/GenBank/DDBJ databases">
        <authorList>
            <person name="Ye M."/>
            <person name="Zhang Q.H."/>
            <person name="Zhou J."/>
            <person name="Shen Y."/>
            <person name="Wu X.Y."/>
            <person name="Guan Z.Q."/>
            <person name="Wang L."/>
            <person name="Fan H.Y."/>
            <person name="Mao Y.F."/>
            <person name="Dai M."/>
            <person name="Huang Q.H."/>
            <person name="Chen S.J."/>
            <person name="Chen Z."/>
        </authorList>
    </citation>
    <scope>NUCLEOTIDE SEQUENCE [MRNA] (ISOFORM 1)</scope>
    <source>
        <tissue>Blood</tissue>
    </source>
</reference>
<reference key="4">
    <citation type="submission" date="2001-07" db="EMBL/GenBank/DDBJ databases">
        <authorList>
            <person name="Liu J."/>
            <person name="Zhou Y."/>
            <person name="Peng X."/>
            <person name="Yuan J."/>
            <person name="Qiang B."/>
        </authorList>
    </citation>
    <scope>NUCLEOTIDE SEQUENCE [MRNA] (ISOFORM 1)</scope>
</reference>
<reference key="5">
    <citation type="journal article" date="2001" name="Genome Res.">
        <title>Towards a catalog of human genes and proteins: sequencing and analysis of 500 novel complete protein coding human cDNAs.</title>
        <authorList>
            <person name="Wiemann S."/>
            <person name="Weil B."/>
            <person name="Wellenreuther R."/>
            <person name="Gassenhuber J."/>
            <person name="Glassl S."/>
            <person name="Ansorge W."/>
            <person name="Boecher M."/>
            <person name="Bloecker H."/>
            <person name="Bauersachs S."/>
            <person name="Blum H."/>
            <person name="Lauber J."/>
            <person name="Duesterhoeft A."/>
            <person name="Beyer A."/>
            <person name="Koehrer K."/>
            <person name="Strack N."/>
            <person name="Mewes H.-W."/>
            <person name="Ottenwaelder B."/>
            <person name="Obermaier B."/>
            <person name="Tampe J."/>
            <person name="Heubner D."/>
            <person name="Wambutt R."/>
            <person name="Korn B."/>
            <person name="Klein M."/>
            <person name="Poustka A."/>
        </authorList>
    </citation>
    <scope>NUCLEOTIDE SEQUENCE [LARGE SCALE MRNA] (ISOFORM 1)</scope>
</reference>
<reference key="6">
    <citation type="submission" date="2003-05" db="EMBL/GenBank/DDBJ databases">
        <title>Cloning of human full-length CDSs in BD Creator(TM) system donor vector.</title>
        <authorList>
            <person name="Kalnine N."/>
            <person name="Chen X."/>
            <person name="Rolfs A."/>
            <person name="Halleck A."/>
            <person name="Hines L."/>
            <person name="Eisenstein S."/>
            <person name="Koundinya M."/>
            <person name="Raphael J."/>
            <person name="Moreira D."/>
            <person name="Kelley T."/>
            <person name="LaBaer J."/>
            <person name="Lin Y."/>
            <person name="Phelan M."/>
            <person name="Farmer A."/>
        </authorList>
    </citation>
    <scope>NUCLEOTIDE SEQUENCE [LARGE SCALE MRNA] (ISOFORM 1)</scope>
</reference>
<reference key="7">
    <citation type="journal article" date="2004" name="Nat. Genet.">
        <title>Complete sequencing and characterization of 21,243 full-length human cDNAs.</title>
        <authorList>
            <person name="Ota T."/>
            <person name="Suzuki Y."/>
            <person name="Nishikawa T."/>
            <person name="Otsuki T."/>
            <person name="Sugiyama T."/>
            <person name="Irie R."/>
            <person name="Wakamatsu A."/>
            <person name="Hayashi K."/>
            <person name="Sato H."/>
            <person name="Nagai K."/>
            <person name="Kimura K."/>
            <person name="Makita H."/>
            <person name="Sekine M."/>
            <person name="Obayashi M."/>
            <person name="Nishi T."/>
            <person name="Shibahara T."/>
            <person name="Tanaka T."/>
            <person name="Ishii S."/>
            <person name="Yamamoto J."/>
            <person name="Saito K."/>
            <person name="Kawai Y."/>
            <person name="Isono Y."/>
            <person name="Nakamura Y."/>
            <person name="Nagahari K."/>
            <person name="Murakami K."/>
            <person name="Yasuda T."/>
            <person name="Iwayanagi T."/>
            <person name="Wagatsuma M."/>
            <person name="Shiratori A."/>
            <person name="Sudo H."/>
            <person name="Hosoiri T."/>
            <person name="Kaku Y."/>
            <person name="Kodaira H."/>
            <person name="Kondo H."/>
            <person name="Sugawara M."/>
            <person name="Takahashi M."/>
            <person name="Kanda K."/>
            <person name="Yokoi T."/>
            <person name="Furuya T."/>
            <person name="Kikkawa E."/>
            <person name="Omura Y."/>
            <person name="Abe K."/>
            <person name="Kamihara K."/>
            <person name="Katsuta N."/>
            <person name="Sato K."/>
            <person name="Tanikawa M."/>
            <person name="Yamazaki M."/>
            <person name="Ninomiya K."/>
            <person name="Ishibashi T."/>
            <person name="Yamashita H."/>
            <person name="Murakawa K."/>
            <person name="Fujimori K."/>
            <person name="Tanai H."/>
            <person name="Kimata M."/>
            <person name="Watanabe M."/>
            <person name="Hiraoka S."/>
            <person name="Chiba Y."/>
            <person name="Ishida S."/>
            <person name="Ono Y."/>
            <person name="Takiguchi S."/>
            <person name="Watanabe S."/>
            <person name="Yosida M."/>
            <person name="Hotuta T."/>
            <person name="Kusano J."/>
            <person name="Kanehori K."/>
            <person name="Takahashi-Fujii A."/>
            <person name="Hara H."/>
            <person name="Tanase T.-O."/>
            <person name="Nomura Y."/>
            <person name="Togiya S."/>
            <person name="Komai F."/>
            <person name="Hara R."/>
            <person name="Takeuchi K."/>
            <person name="Arita M."/>
            <person name="Imose N."/>
            <person name="Musashino K."/>
            <person name="Yuuki H."/>
            <person name="Oshima A."/>
            <person name="Sasaki N."/>
            <person name="Aotsuka S."/>
            <person name="Yoshikawa Y."/>
            <person name="Matsunawa H."/>
            <person name="Ichihara T."/>
            <person name="Shiohata N."/>
            <person name="Sano S."/>
            <person name="Moriya S."/>
            <person name="Momiyama H."/>
            <person name="Satoh N."/>
            <person name="Takami S."/>
            <person name="Terashima Y."/>
            <person name="Suzuki O."/>
            <person name="Nakagawa S."/>
            <person name="Senoh A."/>
            <person name="Mizoguchi H."/>
            <person name="Goto Y."/>
            <person name="Shimizu F."/>
            <person name="Wakebe H."/>
            <person name="Hishigaki H."/>
            <person name="Watanabe T."/>
            <person name="Sugiyama A."/>
            <person name="Takemoto M."/>
            <person name="Kawakami B."/>
            <person name="Yamazaki M."/>
            <person name="Watanabe K."/>
            <person name="Kumagai A."/>
            <person name="Itakura S."/>
            <person name="Fukuzumi Y."/>
            <person name="Fujimori Y."/>
            <person name="Komiyama M."/>
            <person name="Tashiro H."/>
            <person name="Tanigami A."/>
            <person name="Fujiwara T."/>
            <person name="Ono T."/>
            <person name="Yamada K."/>
            <person name="Fujii Y."/>
            <person name="Ozaki K."/>
            <person name="Hirao M."/>
            <person name="Ohmori Y."/>
            <person name="Kawabata A."/>
            <person name="Hikiji T."/>
            <person name="Kobatake N."/>
            <person name="Inagaki H."/>
            <person name="Ikema Y."/>
            <person name="Okamoto S."/>
            <person name="Okitani R."/>
            <person name="Kawakami T."/>
            <person name="Noguchi S."/>
            <person name="Itoh T."/>
            <person name="Shigeta K."/>
            <person name="Senba T."/>
            <person name="Matsumura K."/>
            <person name="Nakajima Y."/>
            <person name="Mizuno T."/>
            <person name="Morinaga M."/>
            <person name="Sasaki M."/>
            <person name="Togashi T."/>
            <person name="Oyama M."/>
            <person name="Hata H."/>
            <person name="Watanabe M."/>
            <person name="Komatsu T."/>
            <person name="Mizushima-Sugano J."/>
            <person name="Satoh T."/>
            <person name="Shirai Y."/>
            <person name="Takahashi Y."/>
            <person name="Nakagawa K."/>
            <person name="Okumura K."/>
            <person name="Nagase T."/>
            <person name="Nomura N."/>
            <person name="Kikuchi H."/>
            <person name="Masuho Y."/>
            <person name="Yamashita R."/>
            <person name="Nakai K."/>
            <person name="Yada T."/>
            <person name="Nakamura Y."/>
            <person name="Ohara O."/>
            <person name="Isogai T."/>
            <person name="Sugano S."/>
        </authorList>
    </citation>
    <scope>NUCLEOTIDE SEQUENCE [LARGE SCALE MRNA] (ISOFORMS 1 AND 2)</scope>
    <source>
        <tissue>Cerebellum</tissue>
    </source>
</reference>
<reference key="8">
    <citation type="journal article" date="2006" name="Nature">
        <title>The finished DNA sequence of human chromosome 12.</title>
        <authorList>
            <person name="Scherer S.E."/>
            <person name="Muzny D.M."/>
            <person name="Buhay C.J."/>
            <person name="Chen R."/>
            <person name="Cree A."/>
            <person name="Ding Y."/>
            <person name="Dugan-Rocha S."/>
            <person name="Gill R."/>
            <person name="Gunaratne P."/>
            <person name="Harris R.A."/>
            <person name="Hawes A.C."/>
            <person name="Hernandez J."/>
            <person name="Hodgson A.V."/>
            <person name="Hume J."/>
            <person name="Jackson A."/>
            <person name="Khan Z.M."/>
            <person name="Kovar-Smith C."/>
            <person name="Lewis L.R."/>
            <person name="Lozado R.J."/>
            <person name="Metzker M.L."/>
            <person name="Milosavljevic A."/>
            <person name="Miner G.R."/>
            <person name="Montgomery K.T."/>
            <person name="Morgan M.B."/>
            <person name="Nazareth L.V."/>
            <person name="Scott G."/>
            <person name="Sodergren E."/>
            <person name="Song X.-Z."/>
            <person name="Steffen D."/>
            <person name="Lovering R.C."/>
            <person name="Wheeler D.A."/>
            <person name="Worley K.C."/>
            <person name="Yuan Y."/>
            <person name="Zhang Z."/>
            <person name="Adams C.Q."/>
            <person name="Ansari-Lari M.A."/>
            <person name="Ayele M."/>
            <person name="Brown M.J."/>
            <person name="Chen G."/>
            <person name="Chen Z."/>
            <person name="Clerc-Blankenburg K.P."/>
            <person name="Davis C."/>
            <person name="Delgado O."/>
            <person name="Dinh H.H."/>
            <person name="Draper H."/>
            <person name="Gonzalez-Garay M.L."/>
            <person name="Havlak P."/>
            <person name="Jackson L.R."/>
            <person name="Jacob L.S."/>
            <person name="Kelly S.H."/>
            <person name="Li L."/>
            <person name="Li Z."/>
            <person name="Liu J."/>
            <person name="Liu W."/>
            <person name="Lu J."/>
            <person name="Maheshwari M."/>
            <person name="Nguyen B.-V."/>
            <person name="Okwuonu G.O."/>
            <person name="Pasternak S."/>
            <person name="Perez L.M."/>
            <person name="Plopper F.J.H."/>
            <person name="Santibanez J."/>
            <person name="Shen H."/>
            <person name="Tabor P.E."/>
            <person name="Verduzco D."/>
            <person name="Waldron L."/>
            <person name="Wang Q."/>
            <person name="Williams G.A."/>
            <person name="Zhang J."/>
            <person name="Zhou J."/>
            <person name="Allen C.C."/>
            <person name="Amin A.G."/>
            <person name="Anyalebechi V."/>
            <person name="Bailey M."/>
            <person name="Barbaria J.A."/>
            <person name="Bimage K.E."/>
            <person name="Bryant N.P."/>
            <person name="Burch P.E."/>
            <person name="Burkett C.E."/>
            <person name="Burrell K.L."/>
            <person name="Calderon E."/>
            <person name="Cardenas V."/>
            <person name="Carter K."/>
            <person name="Casias K."/>
            <person name="Cavazos I."/>
            <person name="Cavazos S.R."/>
            <person name="Ceasar H."/>
            <person name="Chacko J."/>
            <person name="Chan S.N."/>
            <person name="Chavez D."/>
            <person name="Christopoulos C."/>
            <person name="Chu J."/>
            <person name="Cockrell R."/>
            <person name="Cox C.D."/>
            <person name="Dang M."/>
            <person name="Dathorne S.R."/>
            <person name="David R."/>
            <person name="Davis C.M."/>
            <person name="Davy-Carroll L."/>
            <person name="Deshazo D.R."/>
            <person name="Donlin J.E."/>
            <person name="D'Souza L."/>
            <person name="Eaves K.A."/>
            <person name="Egan A."/>
            <person name="Emery-Cohen A.J."/>
            <person name="Escotto M."/>
            <person name="Flagg N."/>
            <person name="Forbes L.D."/>
            <person name="Gabisi A.M."/>
            <person name="Garza M."/>
            <person name="Hamilton C."/>
            <person name="Henderson N."/>
            <person name="Hernandez O."/>
            <person name="Hines S."/>
            <person name="Hogues M.E."/>
            <person name="Huang M."/>
            <person name="Idlebird D.G."/>
            <person name="Johnson R."/>
            <person name="Jolivet A."/>
            <person name="Jones S."/>
            <person name="Kagan R."/>
            <person name="King L.M."/>
            <person name="Leal B."/>
            <person name="Lebow H."/>
            <person name="Lee S."/>
            <person name="LeVan J.M."/>
            <person name="Lewis L.C."/>
            <person name="London P."/>
            <person name="Lorensuhewa L.M."/>
            <person name="Loulseged H."/>
            <person name="Lovett D.A."/>
            <person name="Lucier A."/>
            <person name="Lucier R.L."/>
            <person name="Ma J."/>
            <person name="Madu R.C."/>
            <person name="Mapua P."/>
            <person name="Martindale A.D."/>
            <person name="Martinez E."/>
            <person name="Massey E."/>
            <person name="Mawhiney S."/>
            <person name="Meador M.G."/>
            <person name="Mendez S."/>
            <person name="Mercado C."/>
            <person name="Mercado I.C."/>
            <person name="Merritt C.E."/>
            <person name="Miner Z.L."/>
            <person name="Minja E."/>
            <person name="Mitchell T."/>
            <person name="Mohabbat F."/>
            <person name="Mohabbat K."/>
            <person name="Montgomery B."/>
            <person name="Moore N."/>
            <person name="Morris S."/>
            <person name="Munidasa M."/>
            <person name="Ngo R.N."/>
            <person name="Nguyen N.B."/>
            <person name="Nickerson E."/>
            <person name="Nwaokelemeh O.O."/>
            <person name="Nwokenkwo S."/>
            <person name="Obregon M."/>
            <person name="Oguh M."/>
            <person name="Oragunye N."/>
            <person name="Oviedo R.J."/>
            <person name="Parish B.J."/>
            <person name="Parker D.N."/>
            <person name="Parrish J."/>
            <person name="Parks K.L."/>
            <person name="Paul H.A."/>
            <person name="Payton B.A."/>
            <person name="Perez A."/>
            <person name="Perrin W."/>
            <person name="Pickens A."/>
            <person name="Primus E.L."/>
            <person name="Pu L.-L."/>
            <person name="Puazo M."/>
            <person name="Quiles M.M."/>
            <person name="Quiroz J.B."/>
            <person name="Rabata D."/>
            <person name="Reeves K."/>
            <person name="Ruiz S.J."/>
            <person name="Shao H."/>
            <person name="Sisson I."/>
            <person name="Sonaike T."/>
            <person name="Sorelle R.P."/>
            <person name="Sutton A.E."/>
            <person name="Svatek A.F."/>
            <person name="Svetz L.A."/>
            <person name="Tamerisa K.S."/>
            <person name="Taylor T.R."/>
            <person name="Teague B."/>
            <person name="Thomas N."/>
            <person name="Thorn R.D."/>
            <person name="Trejos Z.Y."/>
            <person name="Trevino B.K."/>
            <person name="Ukegbu O.N."/>
            <person name="Urban J.B."/>
            <person name="Vasquez L.I."/>
            <person name="Vera V.A."/>
            <person name="Villasana D.M."/>
            <person name="Wang L."/>
            <person name="Ward-Moore S."/>
            <person name="Warren J.T."/>
            <person name="Wei X."/>
            <person name="White F."/>
            <person name="Williamson A.L."/>
            <person name="Wleczyk R."/>
            <person name="Wooden H.S."/>
            <person name="Wooden S.H."/>
            <person name="Yen J."/>
            <person name="Yoon L."/>
            <person name="Yoon V."/>
            <person name="Zorrilla S.E."/>
            <person name="Nelson D."/>
            <person name="Kucherlapati R."/>
            <person name="Weinstock G."/>
            <person name="Gibbs R.A."/>
        </authorList>
    </citation>
    <scope>NUCLEOTIDE SEQUENCE [LARGE SCALE GENOMIC DNA]</scope>
</reference>
<reference key="9">
    <citation type="submission" date="2005-07" db="EMBL/GenBank/DDBJ databases">
        <authorList>
            <person name="Mural R.J."/>
            <person name="Istrail S."/>
            <person name="Sutton G.G."/>
            <person name="Florea L."/>
            <person name="Halpern A.L."/>
            <person name="Mobarry C.M."/>
            <person name="Lippert R."/>
            <person name="Walenz B."/>
            <person name="Shatkay H."/>
            <person name="Dew I."/>
            <person name="Miller J.R."/>
            <person name="Flanigan M.J."/>
            <person name="Edwards N.J."/>
            <person name="Bolanos R."/>
            <person name="Fasulo D."/>
            <person name="Halldorsson B.V."/>
            <person name="Hannenhalli S."/>
            <person name="Turner R."/>
            <person name="Yooseph S."/>
            <person name="Lu F."/>
            <person name="Nusskern D.R."/>
            <person name="Shue B.C."/>
            <person name="Zheng X.H."/>
            <person name="Zhong F."/>
            <person name="Delcher A.L."/>
            <person name="Huson D.H."/>
            <person name="Kravitz S.A."/>
            <person name="Mouchard L."/>
            <person name="Reinert K."/>
            <person name="Remington K.A."/>
            <person name="Clark A.G."/>
            <person name="Waterman M.S."/>
            <person name="Eichler E.E."/>
            <person name="Adams M.D."/>
            <person name="Hunkapiller M.W."/>
            <person name="Myers E.W."/>
            <person name="Venter J.C."/>
        </authorList>
    </citation>
    <scope>NUCLEOTIDE SEQUENCE [LARGE SCALE GENOMIC DNA]</scope>
</reference>
<reference key="10">
    <citation type="journal article" date="2004" name="Genome Res.">
        <title>The status, quality, and expansion of the NIH full-length cDNA project: the Mammalian Gene Collection (MGC).</title>
        <authorList>
            <consortium name="The MGC Project Team"/>
        </authorList>
    </citation>
    <scope>NUCLEOTIDE SEQUENCE [LARGE SCALE MRNA] (ISOFORM 1)</scope>
    <source>
        <tissue>Placenta</tissue>
        <tissue>Retina</tissue>
    </source>
</reference>
<reference key="11">
    <citation type="submission" date="2007-03" db="UniProtKB">
        <authorList>
            <person name="Lubec G."/>
            <person name="Afjehi-Sadat L."/>
        </authorList>
    </citation>
    <scope>PROTEIN SEQUENCE OF 250-262 AND 273-290</scope>
    <scope>IDENTIFICATION BY MASS SPECTROMETRY</scope>
    <source>
        <tissue>Brain</tissue>
        <tissue>Cajal-Retzius cell</tissue>
    </source>
</reference>
<reference key="12">
    <citation type="journal article" date="2005" name="FEBS Lett.">
        <title>Unrip is a component of SMN complexes active in snRNP assembly.</title>
        <authorList>
            <person name="Carissimi C."/>
            <person name="Baccon J."/>
            <person name="Straccia M."/>
            <person name="Chiarella P."/>
            <person name="Maiolica A."/>
            <person name="Sawyer A."/>
            <person name="Rappsilber J."/>
            <person name="Pellizzoni L."/>
        </authorList>
    </citation>
    <scope>IDENTIFICATION IN SMN COMPLEX</scope>
    <scope>INTERACTION WITH GEMIN6 AND GEMIN7</scope>
    <scope>SUBCELLULAR LOCATION</scope>
</reference>
<reference key="13">
    <citation type="journal article" date="2005" name="Hum. Mol. Genet.">
        <title>Unrip, a factor implicated in cap-independent translation, associates with the cytosolic SMN complex and influences its intracellular localization.</title>
        <authorList>
            <person name="Grimmler M."/>
            <person name="Otter S."/>
            <person name="Peter C."/>
            <person name="Mueller F."/>
            <person name="Chari A."/>
            <person name="Fischer U."/>
        </authorList>
    </citation>
    <scope>IDENTIFICATION IN SMN COMPLEX</scope>
    <scope>SUBCELLULAR LOCATION</scope>
</reference>
<reference key="14">
    <citation type="journal article" date="2005" name="J. Biol. Chem.">
        <title>Regulation of transforming growth factor-beta signaling and PDK1 kinase activity by physical interaction between PDK1 and serine-threonine kinase receptor-associated protein.</title>
        <authorList>
            <person name="Seong H.A."/>
            <person name="Jung H."/>
            <person name="Choi H.S."/>
            <person name="Kim K.T."/>
            <person name="Ha H."/>
        </authorList>
    </citation>
    <scope>FUNCTION</scope>
    <scope>INTERACTION WITH PDPK1</scope>
</reference>
<reference key="15">
    <citation type="journal article" date="2007" name="J. Biol. Chem.">
        <title>A comprehensive interaction map of the human survival of motor neuron (SMN) complex.</title>
        <authorList>
            <person name="Otter S."/>
            <person name="Grimmler M."/>
            <person name="Neuenkirchen N."/>
            <person name="Chari A."/>
            <person name="Sickmann A."/>
            <person name="Fischer U."/>
        </authorList>
    </citation>
    <scope>IDENTIFICATION IN THE SMN COMPLEX</scope>
    <scope>INTERACTION WITH GEMIN7</scope>
</reference>
<reference key="16">
    <citation type="journal article" date="2008" name="Cell">
        <title>An assembly chaperone collaborates with the SMN complex to generate spliceosomal SnRNPs.</title>
        <authorList>
            <person name="Chari A."/>
            <person name="Golas M.M."/>
            <person name="Klingenhager M."/>
            <person name="Neuenkirchen N."/>
            <person name="Sander B."/>
            <person name="Englbrecht C."/>
            <person name="Sickmann A."/>
            <person name="Stark H."/>
            <person name="Fischer U."/>
        </authorList>
    </citation>
    <scope>FUNCTION IN SNRNP BIOGENESIS</scope>
    <scope>IDENTIFICATION IN SMN-SM COMPLEX</scope>
</reference>
<reference key="17">
    <citation type="journal article" date="2008" name="Proc. Natl. Acad. Sci. U.S.A.">
        <title>A quantitative atlas of mitotic phosphorylation.</title>
        <authorList>
            <person name="Dephoure N."/>
            <person name="Zhou C."/>
            <person name="Villen J."/>
            <person name="Beausoleil S.A."/>
            <person name="Bakalarski C.E."/>
            <person name="Elledge S.J."/>
            <person name="Gygi S.P."/>
        </authorList>
    </citation>
    <scope>PHOSPHORYLATION [LARGE SCALE ANALYSIS] AT SER-335 AND SER-338</scope>
    <scope>IDENTIFICATION BY MASS SPECTROMETRY [LARGE SCALE ANALYSIS]</scope>
    <source>
        <tissue>Cervix carcinoma</tissue>
    </source>
</reference>
<reference key="18">
    <citation type="journal article" date="2011" name="BMC Syst. Biol.">
        <title>Initial characterization of the human central proteome.</title>
        <authorList>
            <person name="Burkard T.R."/>
            <person name="Planyavsky M."/>
            <person name="Kaupe I."/>
            <person name="Breitwieser F.P."/>
            <person name="Buerckstuemmer T."/>
            <person name="Bennett K.L."/>
            <person name="Superti-Furga G."/>
            <person name="Colinge J."/>
        </authorList>
    </citation>
    <scope>IDENTIFICATION BY MASS SPECTROMETRY [LARGE SCALE ANALYSIS]</scope>
</reference>
<reference key="19">
    <citation type="journal article" date="2013" name="J. Proteome Res.">
        <title>Toward a comprehensive characterization of a human cancer cell phosphoproteome.</title>
        <authorList>
            <person name="Zhou H."/>
            <person name="Di Palma S."/>
            <person name="Preisinger C."/>
            <person name="Peng M."/>
            <person name="Polat A.N."/>
            <person name="Heck A.J."/>
            <person name="Mohammed S."/>
        </authorList>
    </citation>
    <scope>PHOSPHORYLATION [LARGE SCALE ANALYSIS] AT SER-312</scope>
    <scope>IDENTIFICATION BY MASS SPECTROMETRY [LARGE SCALE ANALYSIS]</scope>
    <source>
        <tissue>Erythroleukemia</tissue>
    </source>
</reference>
<reference key="20">
    <citation type="journal article" date="2014" name="J. Proteomics">
        <title>An enzyme assisted RP-RPLC approach for in-depth analysis of human liver phosphoproteome.</title>
        <authorList>
            <person name="Bian Y."/>
            <person name="Song C."/>
            <person name="Cheng K."/>
            <person name="Dong M."/>
            <person name="Wang F."/>
            <person name="Huang J."/>
            <person name="Sun D."/>
            <person name="Wang L."/>
            <person name="Ye M."/>
            <person name="Zou H."/>
        </authorList>
    </citation>
    <scope>PHOSPHORYLATION [LARGE SCALE ANALYSIS] AT SER-335 AND SER-338</scope>
    <scope>IDENTIFICATION BY MASS SPECTROMETRY [LARGE SCALE ANALYSIS]</scope>
    <source>
        <tissue>Liver</tissue>
    </source>
</reference>
<reference key="21">
    <citation type="journal article" date="2017" name="Cell Rep.">
        <title>TRIM48 Promotes ASK1 Activation and Cell Death through Ubiquitination-Dependent Degradation of the ASK1-Negative Regulator PRMT1.</title>
        <authorList>
            <person name="Hirata Y."/>
            <person name="Katagiri K."/>
            <person name="Nagaoka K."/>
            <person name="Morishita T."/>
            <person name="Kudoh Y."/>
            <person name="Hatta T."/>
            <person name="Naguro I."/>
            <person name="Kano K."/>
            <person name="Udagawa T."/>
            <person name="Natsume T."/>
            <person name="Aoki J."/>
            <person name="Inada T."/>
            <person name="Noguchi T."/>
            <person name="Ichijo H."/>
            <person name="Matsuzawa A."/>
        </authorList>
    </citation>
    <scope>INTERACTION WITH TRIM48</scope>
</reference>
<evidence type="ECO:0000269" key="1">
    <source>
    </source>
</evidence>
<evidence type="ECO:0000269" key="2">
    <source>
    </source>
</evidence>
<evidence type="ECO:0000269" key="3">
    <source>
    </source>
</evidence>
<evidence type="ECO:0000269" key="4">
    <source>
    </source>
</evidence>
<evidence type="ECO:0000269" key="5">
    <source>
    </source>
</evidence>
<evidence type="ECO:0000269" key="6">
    <source>
    </source>
</evidence>
<evidence type="ECO:0000269" key="7">
    <source>
    </source>
</evidence>
<evidence type="ECO:0000303" key="8">
    <source>
    </source>
</evidence>
<evidence type="ECO:0000305" key="9"/>
<evidence type="ECO:0007744" key="10">
    <source>
    </source>
</evidence>
<evidence type="ECO:0007744" key="11">
    <source>
    </source>
</evidence>
<evidence type="ECO:0007744" key="12">
    <source>
    </source>
</evidence>
<name>STRAP_HUMAN</name>
<organism>
    <name type="scientific">Homo sapiens</name>
    <name type="common">Human</name>
    <dbReference type="NCBI Taxonomy" id="9606"/>
    <lineage>
        <taxon>Eukaryota</taxon>
        <taxon>Metazoa</taxon>
        <taxon>Chordata</taxon>
        <taxon>Craniata</taxon>
        <taxon>Vertebrata</taxon>
        <taxon>Euteleostomi</taxon>
        <taxon>Mammalia</taxon>
        <taxon>Eutheria</taxon>
        <taxon>Euarchontoglires</taxon>
        <taxon>Primates</taxon>
        <taxon>Haplorrhini</taxon>
        <taxon>Catarrhini</taxon>
        <taxon>Hominidae</taxon>
        <taxon>Homo</taxon>
    </lineage>
</organism>
<gene>
    <name type="primary">STRAP</name>
    <name type="synonym">MAWD</name>
    <name type="synonym">UNRIP</name>
</gene>
<sequence>MAMRQTPLTCSGHTRPVVDLAFSGITPYGYFLISACKDGKPMLRQGDTGDWIGTFLGHKGAVWGATLNKDATKAATAAADFTAKVWDAVSGDELMTLAHKHIVKTVDFTQDSNYLLTGGQDKLLRIYDLNKPEAEPKEISGHTSGIKKALWCSEDKQILSADDKTVRLWDHATMTEVKSLNFNMSVSSMEYIPEGEILVITYGRSIAFHSAVSLDPIKSFEAPATINSASLHPEKEFLVAGGEDFKLYKYDYNSGEELESYKGHFGPIHCVRFSPDGELYASGSEDGTLRLWQTVVGKTYGLWKCVLPEEDSGELAKPKIGFPETTEEELEEIASENSDCIFPSAPDVKA</sequence>